<dbReference type="EMBL" id="X13357">
    <property type="protein sequence ID" value="CAA31734.1"/>
    <property type="molecule type" value="Genomic_RNA"/>
</dbReference>
<dbReference type="EMBL" id="DQ099525">
    <property type="protein sequence ID" value="AAZ07892.1"/>
    <property type="molecule type" value="Genomic_RNA"/>
</dbReference>
<dbReference type="PIR" id="S07814">
    <property type="entry name" value="MNVNAV"/>
</dbReference>
<dbReference type="PDB" id="8FUQ">
    <property type="method" value="X-ray"/>
    <property type="resolution" value="1.80 A"/>
    <property type="chains" value="A/B/C/D/E/F=54-171"/>
</dbReference>
<dbReference type="PDBsum" id="8FUQ"/>
<dbReference type="SMR" id="P15198"/>
<dbReference type="Proteomes" id="UP000008617">
    <property type="component" value="Genome"/>
</dbReference>
<dbReference type="GO" id="GO:0043657">
    <property type="term" value="C:host cell"/>
    <property type="evidence" value="ECO:0007669"/>
    <property type="project" value="GOC"/>
</dbReference>
<dbReference type="GO" id="GO:0030430">
    <property type="term" value="C:host cell cytoplasm"/>
    <property type="evidence" value="ECO:0007669"/>
    <property type="project" value="UniProtKB-SubCell"/>
</dbReference>
<dbReference type="GO" id="GO:0042025">
    <property type="term" value="C:host cell nucleus"/>
    <property type="evidence" value="ECO:0007669"/>
    <property type="project" value="UniProtKB-SubCell"/>
</dbReference>
<dbReference type="GO" id="GO:0044423">
    <property type="term" value="C:virion component"/>
    <property type="evidence" value="ECO:0007669"/>
    <property type="project" value="UniProtKB-KW"/>
</dbReference>
<dbReference type="GO" id="GO:0003968">
    <property type="term" value="F:RNA-directed RNA polymerase activity"/>
    <property type="evidence" value="ECO:0007669"/>
    <property type="project" value="InterPro"/>
</dbReference>
<dbReference type="GO" id="GO:0075521">
    <property type="term" value="P:microtubule-dependent intracellular transport of viral material towards nucleus"/>
    <property type="evidence" value="ECO:0007669"/>
    <property type="project" value="UniProtKB-KW"/>
</dbReference>
<dbReference type="GO" id="GO:0046718">
    <property type="term" value="P:symbiont entry into host cell"/>
    <property type="evidence" value="ECO:0007669"/>
    <property type="project" value="UniProtKB-KW"/>
</dbReference>
<dbReference type="GO" id="GO:0039723">
    <property type="term" value="P:symbiont-mediated suppression of host cytoplasmic pattern recognition receptor signaling pathway via inhibition of TBK1 activity"/>
    <property type="evidence" value="ECO:0007669"/>
    <property type="project" value="UniProtKB-KW"/>
</dbReference>
<dbReference type="GO" id="GO:0039563">
    <property type="term" value="P:symbiont-mediated suppression of host JAK-STAT cascade via inhibition of STAT1 activity"/>
    <property type="evidence" value="ECO:0007669"/>
    <property type="project" value="UniProtKB-KW"/>
</dbReference>
<dbReference type="GO" id="GO:0039564">
    <property type="term" value="P:symbiont-mediated suppression of host JAK-STAT cascade via inhibition of STAT2 activity"/>
    <property type="evidence" value="ECO:0007669"/>
    <property type="project" value="UniProtKB-KW"/>
</dbReference>
<dbReference type="GO" id="GO:0039722">
    <property type="term" value="P:symbiont-mediated suppression of host toll-like receptor signaling pathway"/>
    <property type="evidence" value="ECO:0007669"/>
    <property type="project" value="UniProtKB-KW"/>
</dbReference>
<dbReference type="GO" id="GO:0039502">
    <property type="term" value="P:symbiont-mediated suppression of host type I interferon-mediated signaling pathway"/>
    <property type="evidence" value="ECO:0007669"/>
    <property type="project" value="UniProtKB-KW"/>
</dbReference>
<dbReference type="GO" id="GO:0019083">
    <property type="term" value="P:viral transcription"/>
    <property type="evidence" value="ECO:0007669"/>
    <property type="project" value="InterPro"/>
</dbReference>
<dbReference type="CDD" id="cd21032">
    <property type="entry name" value="RABV_P-protein-C_like"/>
    <property type="match status" value="1"/>
</dbReference>
<dbReference type="FunFam" id="1.20.120.820:FF:000001">
    <property type="entry name" value="Phosphoprotein"/>
    <property type="match status" value="1"/>
</dbReference>
<dbReference type="Gene3D" id="6.10.140.1560">
    <property type="match status" value="1"/>
</dbReference>
<dbReference type="Gene3D" id="1.20.120.820">
    <property type="entry name" value="Phosphoprotein, C-terminal domain"/>
    <property type="match status" value="1"/>
</dbReference>
<dbReference type="InterPro" id="IPR004259">
    <property type="entry name" value="PP_M1-like"/>
</dbReference>
<dbReference type="InterPro" id="IPR037199">
    <property type="entry name" value="PP_M1_C"/>
</dbReference>
<dbReference type="InterPro" id="IPR049506">
    <property type="entry name" value="RABV_P-like_C"/>
</dbReference>
<dbReference type="Pfam" id="PF03012">
    <property type="entry name" value="PP_M1"/>
    <property type="match status" value="1"/>
</dbReference>
<dbReference type="SUPFAM" id="SSF118173">
    <property type="entry name" value="Phosphoprotein M1, C-terminal domain"/>
    <property type="match status" value="1"/>
</dbReference>
<gene>
    <name type="primary">P</name>
</gene>
<proteinExistence type="evidence at protein level"/>
<accession>P15198</accession>
<accession>Q4F902</accession>
<evidence type="ECO:0000250" key="1"/>
<evidence type="ECO:0000250" key="2">
    <source>
        <dbReference type="UniProtKB" id="P16286"/>
    </source>
</evidence>
<evidence type="ECO:0000256" key="3">
    <source>
        <dbReference type="SAM" id="MobiDB-lite"/>
    </source>
</evidence>
<evidence type="ECO:0000305" key="4"/>
<evidence type="ECO:0007829" key="5">
    <source>
        <dbReference type="PDB" id="8FUQ"/>
    </source>
</evidence>
<feature type="chain" id="PRO_0000222827" description="Phosphoprotein">
    <location>
        <begin position="1"/>
        <end position="297"/>
    </location>
</feature>
<feature type="region of interest" description="Disordered" evidence="3">
    <location>
        <begin position="133"/>
        <end position="177"/>
    </location>
</feature>
<feature type="region of interest" description="DYNLL1 and DYNLL2 binding" evidence="1">
    <location>
        <begin position="138"/>
        <end position="172"/>
    </location>
</feature>
<feature type="short sequence motif" description="Nuclear export signal" evidence="1">
    <location>
        <begin position="49"/>
        <end position="58"/>
    </location>
</feature>
<feature type="short sequence motif" description="Nuclear localization signal" evidence="1">
    <location>
        <begin position="211"/>
        <end position="214"/>
    </location>
</feature>
<feature type="compositionally biased region" description="Basic and acidic residues" evidence="3">
    <location>
        <begin position="139"/>
        <end position="157"/>
    </location>
</feature>
<feature type="compositionally biased region" description="Polar residues" evidence="3">
    <location>
        <begin position="158"/>
        <end position="169"/>
    </location>
</feature>
<feature type="modified residue" description="Phosphoserine; by host" evidence="1">
    <location>
        <position position="63"/>
    </location>
</feature>
<feature type="modified residue" description="Phosphoserine; by host" evidence="1">
    <location>
        <position position="64"/>
    </location>
</feature>
<feature type="modified residue" description="Phosphoserine; by host PKC" evidence="1">
    <location>
        <position position="162"/>
    </location>
</feature>
<feature type="modified residue" description="Phosphoserine; by host PKC" evidence="1">
    <location>
        <position position="210"/>
    </location>
</feature>
<feature type="modified residue" description="Phosphoserine; by host PKC" evidence="1">
    <location>
        <position position="271"/>
    </location>
</feature>
<feature type="splice variant" id="VSP_026864" description="In isoform P5." evidence="4">
    <location>
        <begin position="1"/>
        <end position="82"/>
    </location>
</feature>
<feature type="splice variant" id="VSP_026865" description="In isoform P4." evidence="4">
    <location>
        <begin position="1"/>
        <end position="68"/>
    </location>
</feature>
<feature type="splice variant" id="VSP_026866" description="In isoform P3." evidence="4">
    <location>
        <begin position="1"/>
        <end position="52"/>
    </location>
</feature>
<feature type="splice variant" id="VSP_026867" description="In isoform P2." evidence="4">
    <location>
        <begin position="1"/>
        <end position="19"/>
    </location>
</feature>
<feature type="sequence variant" description="In strain: Isolate PM1503.">
    <original>R</original>
    <variation>Q</variation>
    <location>
        <position position="30"/>
    </location>
</feature>
<feature type="sequence variant" description="In strain: Isolate PM1503.">
    <original>D</original>
    <variation>Q</variation>
    <location>
        <position position="36"/>
    </location>
</feature>
<feature type="sequence variant" description="In strain: Isolate PM1503.">
    <original>D</original>
    <variation>G</variation>
    <location>
        <position position="84"/>
    </location>
</feature>
<feature type="sequence variant" description="In strain: Isolate PM1503.">
    <original>V</original>
    <variation>I</variation>
    <location>
        <position position="122"/>
    </location>
</feature>
<feature type="sequence variant" description="In strain: Isolate PM1503.">
    <original>P</original>
    <variation>S</variation>
    <location>
        <position position="179"/>
    </location>
</feature>
<feature type="sequence variant" description="In strain: Isolate PM1503.">
    <original>F</original>
    <variation>L</variation>
    <location>
        <position position="223"/>
    </location>
</feature>
<feature type="helix" evidence="5">
    <location>
        <begin position="89"/>
        <end position="109"/>
    </location>
</feature>
<feature type="helix" evidence="5">
    <location>
        <begin position="114"/>
        <end position="132"/>
    </location>
</feature>
<keyword id="KW-0002">3D-structure</keyword>
<keyword id="KW-0024">Alternative initiation</keyword>
<keyword id="KW-0143">Chaperone</keyword>
<keyword id="KW-1176">Cytoplasmic inwards viral transport</keyword>
<keyword id="KW-1035">Host cytoplasm</keyword>
<keyword id="KW-1048">Host nucleus</keyword>
<keyword id="KW-0945">Host-virus interaction</keyword>
<keyword id="KW-1090">Inhibition of host innate immune response by virus</keyword>
<keyword id="KW-1114">Inhibition of host interferon signaling pathway by virus</keyword>
<keyword id="KW-1105">Inhibition of host STAT1 by virus</keyword>
<keyword id="KW-1106">Inhibition of host STAT2 by virus</keyword>
<keyword id="KW-1223">Inhibition of host TBK1 by virus</keyword>
<keyword id="KW-1225">Inhibition of host TLR pathway by virus</keyword>
<keyword id="KW-0922">Interferon antiviral system evasion</keyword>
<keyword id="KW-1177">Microtubular inwards viral transport</keyword>
<keyword id="KW-0597">Phosphoprotein</keyword>
<keyword id="KW-0899">Viral immunoevasion</keyword>
<keyword id="KW-0693">Viral RNA replication</keyword>
<keyword id="KW-0946">Virion</keyword>
<keyword id="KW-1160">Virus entry into host cell</keyword>
<name>PHOSP_RABVA</name>
<organism>
    <name type="scientific">Rabies virus (strain PM1503/AVO1)</name>
    <name type="common">RABV</name>
    <dbReference type="NCBI Taxonomy" id="11293"/>
    <lineage>
        <taxon>Viruses</taxon>
        <taxon>Riboviria</taxon>
        <taxon>Orthornavirae</taxon>
        <taxon>Negarnaviricota</taxon>
        <taxon>Haploviricotina</taxon>
        <taxon>Monjiviricetes</taxon>
        <taxon>Mononegavirales</taxon>
        <taxon>Rhabdoviridae</taxon>
        <taxon>Alpharhabdovirinae</taxon>
        <taxon>Lyssavirus</taxon>
        <taxon>Lyssavirus rabies</taxon>
    </lineage>
</organism>
<comment type="function">
    <text evidence="1 2">Non catalytic polymerase cofactor and regulatory protein that plays a role in viral transcription and replication. Stabilizes the RNA polymerase L to the N-RNA template and binds the soluble protein N, preventing it from encapsidating non-genomic RNA. Also inhibits host IFN-alpha and IFN-beta signaling by binding and retaining phosphorylated STAT1 in the cytoplasm or by inhibiting the DNA binding of STAT1 in the nucleus. Might be involved, through interaction with host dynein, in intracellular microtubule-dependent virus transport of incoming virus from the synapse toward the cell body (By similarity). Inhibits interferon induction pathways by interacting with host TBK1 and preventing the formation of dynamic cytoplasmic condensates that have liquid properties and that are essential for interferon production (By similarity).</text>
</comment>
<comment type="subunit">
    <molecule>Phosphoprotein</molecule>
    <text evidence="2">Homotrimer when phosphorylated. This trimer is stabilized by binding to the L protein. Binds soluble protein N, and ribonucleocapsid. Interacts with host DYNLL1 and DYNLL2; this interaction may play a role in intracellular microtubule-dependent virus transport of incoming virus. Interacts with host STAT1, STAT2 and PML. Interacts with host TBK1.</text>
</comment>
<comment type="subunit">
    <molecule>Isoform P3</molecule>
    <text evidence="1">Binds host PML.</text>
</comment>
<comment type="subcellular location">
    <molecule>Phosphoprotein</molecule>
    <subcellularLocation>
        <location>Virion</location>
    </subcellularLocation>
    <subcellularLocation>
        <location evidence="1">Host cytoplasm</location>
    </subcellularLocation>
</comment>
<comment type="subcellular location">
    <molecule>Isoform P2</molecule>
    <subcellularLocation>
        <location evidence="1">Host cytoplasm</location>
    </subcellularLocation>
</comment>
<comment type="subcellular location">
    <molecule>Isoform P3</molecule>
    <subcellularLocation>
        <location evidence="1">Host nucleus</location>
    </subcellularLocation>
</comment>
<comment type="subcellular location">
    <molecule>Isoform P4</molecule>
    <subcellularLocation>
        <location evidence="1">Host nucleus</location>
    </subcellularLocation>
</comment>
<comment type="subcellular location">
    <molecule>Isoform P5</molecule>
    <subcellularLocation>
        <location evidence="1">Host nucleus</location>
    </subcellularLocation>
</comment>
<comment type="alternative products">
    <event type="alternative initiation"/>
    <isoform>
        <id>P15198-1</id>
        <name>P</name>
        <sequence type="displayed"/>
    </isoform>
    <isoform>
        <id>P15198-2</id>
        <name>P2</name>
        <sequence type="described" ref="VSP_026867"/>
    </isoform>
    <isoform>
        <id>P15198-3</id>
        <name>P3</name>
        <sequence type="described" ref="VSP_026866"/>
    </isoform>
    <isoform>
        <id>P15198-4</id>
        <name>P4</name>
        <sequence type="described" ref="VSP_026865"/>
    </isoform>
    <isoform>
        <id>P15198-5</id>
        <name>P5</name>
        <sequence type="described" ref="VSP_026864"/>
    </isoform>
</comment>
<comment type="PTM">
    <text evidence="1">Phosphorylated by host PKC and by an unknown kinase.</text>
</comment>
<comment type="similarity">
    <text evidence="4">Belongs to the lyssavirus protein P family.</text>
</comment>
<organismHost>
    <name type="scientific">Homo sapiens</name>
    <name type="common">Human</name>
    <dbReference type="NCBI Taxonomy" id="9606"/>
</organismHost>
<organismHost>
    <name type="scientific">Mammalia</name>
    <dbReference type="NCBI Taxonomy" id="40674"/>
</organismHost>
<reference key="1">
    <citation type="journal article" date="1988" name="Biochimie">
        <title>Sequence of the 3386 3' nucleotides of the genome of the AVO1 strain rabies virus: structural similarities in the protein regions involved in transcription.</title>
        <authorList>
            <person name="Poch O."/>
            <person name="Tordo N."/>
            <person name="Keith G."/>
        </authorList>
    </citation>
    <scope>NUCLEOTIDE SEQUENCE [GENOMIC RNA]</scope>
</reference>
<reference key="2">
    <citation type="submission" date="2005-06" db="EMBL/GenBank/DDBJ databases">
        <title>Characterization of rabies virus vaccine strains.</title>
        <authorList>
            <person name="Stallkamp I."/>
            <person name="Lopez-Yomayuza C.C."/>
            <person name="Thiel H.-J."/>
        </authorList>
    </citation>
    <scope>NUCLEOTIDE SEQUENCE [GENOMIC RNA]</scope>
    <source>
        <strain>Isolate PM1503</strain>
    </source>
</reference>
<protein>
    <recommendedName>
        <fullName>Phosphoprotein</fullName>
        <shortName>Protein P</shortName>
    </recommendedName>
    <alternativeName>
        <fullName>Protein M1</fullName>
    </alternativeName>
</protein>
<sequence>MSKIFVNPSAIRAGLADLEMAEETVDLINRNIEDNDAHLQGEPIEVDNLPEDMKRLHLDDEKSSNLGEMVRVGEGKYREDFQMDEGEDPNLLFQSYLDNVGVQIVRQMRSGERFLKIWSQTVEEIVSYVTVNFPNPPRRSSEDKSTQTTGRELKKETTSAFSQRESQPSKARMVAQVAPGPPALEWSATNEEDDLSVEAEIAHQIAESFSKKYKFPSRSSGIFLYNFEQLKMNLDDIVKEAKNVPGVTRLAHDGSKIPLRCVLGWVALANSKKFQLLVEADKLSKIMQDDLNRYTSC</sequence>